<keyword id="KW-0997">Cell inner membrane</keyword>
<keyword id="KW-1003">Cell membrane</keyword>
<keyword id="KW-0143">Chaperone</keyword>
<keyword id="KW-0472">Membrane</keyword>
<keyword id="KW-0653">Protein transport</keyword>
<keyword id="KW-1185">Reference proteome</keyword>
<keyword id="KW-0812">Transmembrane</keyword>
<keyword id="KW-1133">Transmembrane helix</keyword>
<keyword id="KW-0813">Transport</keyword>
<gene>
    <name evidence="1" type="primary">yidC</name>
    <name type="ordered locus">FTT_0233c</name>
</gene>
<feature type="chain" id="PRO_1000070098" description="Membrane protein insertase YidC">
    <location>
        <begin position="1"/>
        <end position="551"/>
    </location>
</feature>
<feature type="transmembrane region" description="Helical" evidence="1">
    <location>
        <begin position="3"/>
        <end position="23"/>
    </location>
</feature>
<feature type="transmembrane region" description="Helical" evidence="1">
    <location>
        <begin position="361"/>
        <end position="381"/>
    </location>
</feature>
<feature type="transmembrane region" description="Helical" evidence="1">
    <location>
        <begin position="431"/>
        <end position="451"/>
    </location>
</feature>
<feature type="transmembrane region" description="Helical" evidence="1">
    <location>
        <begin position="504"/>
        <end position="524"/>
    </location>
</feature>
<feature type="region of interest" description="Disordered" evidence="2">
    <location>
        <begin position="33"/>
        <end position="59"/>
    </location>
</feature>
<feature type="compositionally biased region" description="Polar residues" evidence="2">
    <location>
        <begin position="33"/>
        <end position="47"/>
    </location>
</feature>
<feature type="compositionally biased region" description="Low complexity" evidence="2">
    <location>
        <begin position="50"/>
        <end position="59"/>
    </location>
</feature>
<sequence length="551" mass="61868">MKANHIRILLLVTIAIMFISLMGKWEQTFPADNTKQQTSATQNNSHYDNADSSTNTDVTTTDAKSSLAKETNFSKYDNAKSITINTGVFKDVKVSLLDGAIISASLKDYSISLDDKTPMSLLTDKSGSEYIAKSTIVVNKQPISVNFEDQGIKIENGKQILTLTGSADGLQITRTYTFDDTKYNISVSQNIKNTTSAPVNVIVDDSFARDFDPAGDSFSLLNAHSYTFTGVAYSTAKDSFRKESFKDISKTNGQPTVINSDGQGWVAFLQHYFVSAWIPQSTNAKIYYKNLNGDVFEAGAFTGATIAPNQSENISSILYTGPIIKANLVDLAPNLEKTLDYGMLSFFSEIIFWVMNHIHSLVGNWGLAIILVTCLIKLIFYPLSAKSYRSMAKMRMLQPRIKRLQETYKDDRQALGKKMMELYKEEKVNPLSGCLPMLIQIPIFISLYWVLLESVELRQAPFIFWIHDLSMKDPYFVLPVLMGLSMFLQQKLSPAPADPMQAKVMMFLPVIFTFLFASFPSGLVLYWLTNNLISISQQWIITRHYQATHKK</sequence>
<dbReference type="EMBL" id="AJ749949">
    <property type="protein sequence ID" value="CAG44866.1"/>
    <property type="molecule type" value="Genomic_DNA"/>
</dbReference>
<dbReference type="RefSeq" id="WP_003021785.1">
    <property type="nucleotide sequence ID" value="NZ_CP010290.1"/>
</dbReference>
<dbReference type="RefSeq" id="YP_169286.1">
    <property type="nucleotide sequence ID" value="NC_006570.2"/>
</dbReference>
<dbReference type="SMR" id="Q5NI56"/>
<dbReference type="IntAct" id="Q5NI56">
    <property type="interactions" value="2"/>
</dbReference>
<dbReference type="STRING" id="177416.FTT_0233c"/>
<dbReference type="DNASU" id="3191276"/>
<dbReference type="EnsemblBacteria" id="CAG44866">
    <property type="protein sequence ID" value="CAG44866"/>
    <property type="gene ID" value="FTT_0233c"/>
</dbReference>
<dbReference type="KEGG" id="ftu:FTT_0233c"/>
<dbReference type="eggNOG" id="COG0706">
    <property type="taxonomic scope" value="Bacteria"/>
</dbReference>
<dbReference type="OrthoDB" id="9780552at2"/>
<dbReference type="Proteomes" id="UP000001174">
    <property type="component" value="Chromosome"/>
</dbReference>
<dbReference type="GO" id="GO:0005886">
    <property type="term" value="C:plasma membrane"/>
    <property type="evidence" value="ECO:0007669"/>
    <property type="project" value="UniProtKB-SubCell"/>
</dbReference>
<dbReference type="GO" id="GO:0032977">
    <property type="term" value="F:membrane insertase activity"/>
    <property type="evidence" value="ECO:0007669"/>
    <property type="project" value="InterPro"/>
</dbReference>
<dbReference type="GO" id="GO:0051205">
    <property type="term" value="P:protein insertion into membrane"/>
    <property type="evidence" value="ECO:0007669"/>
    <property type="project" value="TreeGrafter"/>
</dbReference>
<dbReference type="GO" id="GO:0015031">
    <property type="term" value="P:protein transport"/>
    <property type="evidence" value="ECO:0007669"/>
    <property type="project" value="UniProtKB-KW"/>
</dbReference>
<dbReference type="CDD" id="cd20070">
    <property type="entry name" value="5TM_YidC_Alb3"/>
    <property type="match status" value="1"/>
</dbReference>
<dbReference type="CDD" id="cd19961">
    <property type="entry name" value="EcYidC-like_peri"/>
    <property type="match status" value="1"/>
</dbReference>
<dbReference type="Gene3D" id="2.70.98.90">
    <property type="match status" value="1"/>
</dbReference>
<dbReference type="HAMAP" id="MF_01810">
    <property type="entry name" value="YidC_type1"/>
    <property type="match status" value="1"/>
</dbReference>
<dbReference type="InterPro" id="IPR019998">
    <property type="entry name" value="Membr_insert_YidC"/>
</dbReference>
<dbReference type="InterPro" id="IPR028053">
    <property type="entry name" value="Membr_insert_YidC_N"/>
</dbReference>
<dbReference type="InterPro" id="IPR001708">
    <property type="entry name" value="YidC/ALB3/OXA1/COX18"/>
</dbReference>
<dbReference type="InterPro" id="IPR028055">
    <property type="entry name" value="YidC/Oxa/ALB_C"/>
</dbReference>
<dbReference type="InterPro" id="IPR047196">
    <property type="entry name" value="YidC_ALB_C"/>
</dbReference>
<dbReference type="InterPro" id="IPR038221">
    <property type="entry name" value="YidC_periplasmic_sf"/>
</dbReference>
<dbReference type="NCBIfam" id="NF002352">
    <property type="entry name" value="PRK01318.1-3"/>
    <property type="match status" value="1"/>
</dbReference>
<dbReference type="NCBIfam" id="TIGR03593">
    <property type="entry name" value="yidC_nterm"/>
    <property type="match status" value="1"/>
</dbReference>
<dbReference type="NCBIfam" id="TIGR03592">
    <property type="entry name" value="yidC_oxa1_cterm"/>
    <property type="match status" value="1"/>
</dbReference>
<dbReference type="PANTHER" id="PTHR12428:SF65">
    <property type="entry name" value="CYTOCHROME C OXIDASE ASSEMBLY PROTEIN COX18, MITOCHONDRIAL"/>
    <property type="match status" value="1"/>
</dbReference>
<dbReference type="PANTHER" id="PTHR12428">
    <property type="entry name" value="OXA1"/>
    <property type="match status" value="1"/>
</dbReference>
<dbReference type="Pfam" id="PF02096">
    <property type="entry name" value="60KD_IMP"/>
    <property type="match status" value="1"/>
</dbReference>
<dbReference type="Pfam" id="PF14849">
    <property type="entry name" value="YidC_periplas"/>
    <property type="match status" value="1"/>
</dbReference>
<dbReference type="PRINTS" id="PR00701">
    <property type="entry name" value="60KDINNERMP"/>
</dbReference>
<dbReference type="PRINTS" id="PR01900">
    <property type="entry name" value="YIDCPROTEIN"/>
</dbReference>
<comment type="function">
    <text evidence="1">Required for the insertion and/or proper folding and/or complex formation of integral membrane proteins into the membrane. Involved in integration of membrane proteins that insert both dependently and independently of the Sec translocase complex, as well as at least some lipoproteins. Aids folding of multispanning membrane proteins.</text>
</comment>
<comment type="subunit">
    <text evidence="1">Interacts with the Sec translocase complex via SecD. Specifically interacts with transmembrane segments of nascent integral membrane proteins during membrane integration.</text>
</comment>
<comment type="subcellular location">
    <subcellularLocation>
        <location evidence="1">Cell inner membrane</location>
        <topology evidence="1">Multi-pass membrane protein</topology>
    </subcellularLocation>
</comment>
<comment type="similarity">
    <text evidence="1">Belongs to the OXA1/ALB3/YidC family. Type 1 subfamily.</text>
</comment>
<proteinExistence type="inferred from homology"/>
<evidence type="ECO:0000255" key="1">
    <source>
        <dbReference type="HAMAP-Rule" id="MF_01810"/>
    </source>
</evidence>
<evidence type="ECO:0000256" key="2">
    <source>
        <dbReference type="SAM" id="MobiDB-lite"/>
    </source>
</evidence>
<protein>
    <recommendedName>
        <fullName evidence="1">Membrane protein insertase YidC</fullName>
    </recommendedName>
    <alternativeName>
        <fullName evidence="1">Foldase YidC</fullName>
    </alternativeName>
    <alternativeName>
        <fullName evidence="1">Membrane integrase YidC</fullName>
    </alternativeName>
    <alternativeName>
        <fullName evidence="1">Membrane protein YidC</fullName>
    </alternativeName>
</protein>
<reference key="1">
    <citation type="journal article" date="2005" name="Nat. Genet.">
        <title>The complete genome sequence of Francisella tularensis, the causative agent of tularemia.</title>
        <authorList>
            <person name="Larsson P."/>
            <person name="Oyston P.C.F."/>
            <person name="Chain P."/>
            <person name="Chu M.C."/>
            <person name="Duffield M."/>
            <person name="Fuxelius H.-H."/>
            <person name="Garcia E."/>
            <person name="Haelltorp G."/>
            <person name="Johansson D."/>
            <person name="Isherwood K.E."/>
            <person name="Karp P.D."/>
            <person name="Larsson E."/>
            <person name="Liu Y."/>
            <person name="Michell S."/>
            <person name="Prior J."/>
            <person name="Prior R."/>
            <person name="Malfatti S."/>
            <person name="Sjoestedt A."/>
            <person name="Svensson K."/>
            <person name="Thompson N."/>
            <person name="Vergez L."/>
            <person name="Wagg J.K."/>
            <person name="Wren B.W."/>
            <person name="Lindler L.E."/>
            <person name="Andersson S.G.E."/>
            <person name="Forsman M."/>
            <person name="Titball R.W."/>
        </authorList>
    </citation>
    <scope>NUCLEOTIDE SEQUENCE [LARGE SCALE GENOMIC DNA]</scope>
    <source>
        <strain>SCHU S4 / Schu 4</strain>
    </source>
</reference>
<name>YIDC_FRATT</name>
<accession>Q5NI56</accession>
<organism>
    <name type="scientific">Francisella tularensis subsp. tularensis (strain SCHU S4 / Schu 4)</name>
    <dbReference type="NCBI Taxonomy" id="177416"/>
    <lineage>
        <taxon>Bacteria</taxon>
        <taxon>Pseudomonadati</taxon>
        <taxon>Pseudomonadota</taxon>
        <taxon>Gammaproteobacteria</taxon>
        <taxon>Thiotrichales</taxon>
        <taxon>Francisellaceae</taxon>
        <taxon>Francisella</taxon>
    </lineage>
</organism>